<geneLocation type="chloroplast"/>
<proteinExistence type="inferred from homology"/>
<reference key="1">
    <citation type="journal article" date="1994" name="Proc. Natl. Acad. Sci. U.S.A.">
        <title>Loss of all ndh genes as determined by sequencing the entire chloroplast genome of the black pine Pinus thunbergii.</title>
        <authorList>
            <person name="Wakasugi T."/>
            <person name="Tsudzuki J."/>
            <person name="Ito S."/>
            <person name="Nakashima K."/>
            <person name="Tsudzuki T."/>
            <person name="Sugiura M."/>
        </authorList>
    </citation>
    <scope>NUCLEOTIDE SEQUENCE [LARGE SCALE GENOMIC DNA]</scope>
</reference>
<sequence length="137" mass="15046">MTLNLRVLSPNRVIWDSEVKEIILSTNSGQIGVLPNHASLVAAVDIGVMKIRLNGQWSTMAMMGGFAKIDSDRITILVNNAERDVDIDPREAQENFRIAKADLARAEGKRQAIEADLALKRARTRLEAINASPPVSN</sequence>
<name>ATPE_PINTH</name>
<dbReference type="EMBL" id="D17510">
    <property type="protein sequence ID" value="BAA04371.1"/>
    <property type="molecule type" value="Genomic_DNA"/>
</dbReference>
<dbReference type="PIR" id="T07493">
    <property type="entry name" value="T07493"/>
</dbReference>
<dbReference type="RefSeq" id="NP_042414.1">
    <property type="nucleotide sequence ID" value="NC_001631.1"/>
</dbReference>
<dbReference type="SMR" id="P41623"/>
<dbReference type="GeneID" id="809050"/>
<dbReference type="GO" id="GO:0009535">
    <property type="term" value="C:chloroplast thylakoid membrane"/>
    <property type="evidence" value="ECO:0007669"/>
    <property type="project" value="UniProtKB-SubCell"/>
</dbReference>
<dbReference type="GO" id="GO:0045259">
    <property type="term" value="C:proton-transporting ATP synthase complex"/>
    <property type="evidence" value="ECO:0007669"/>
    <property type="project" value="UniProtKB-KW"/>
</dbReference>
<dbReference type="GO" id="GO:0005524">
    <property type="term" value="F:ATP binding"/>
    <property type="evidence" value="ECO:0007669"/>
    <property type="project" value="UniProtKB-UniRule"/>
</dbReference>
<dbReference type="GO" id="GO:0046933">
    <property type="term" value="F:proton-transporting ATP synthase activity, rotational mechanism"/>
    <property type="evidence" value="ECO:0007669"/>
    <property type="project" value="UniProtKB-UniRule"/>
</dbReference>
<dbReference type="CDD" id="cd12152">
    <property type="entry name" value="F1-ATPase_delta"/>
    <property type="match status" value="1"/>
</dbReference>
<dbReference type="FunFam" id="2.60.15.10:FF:000002">
    <property type="entry name" value="ATP synthase epsilon chain, chloroplastic"/>
    <property type="match status" value="1"/>
</dbReference>
<dbReference type="Gene3D" id="6.10.140.480">
    <property type="match status" value="1"/>
</dbReference>
<dbReference type="Gene3D" id="2.60.15.10">
    <property type="entry name" value="F0F1 ATP synthase delta/epsilon subunit, N-terminal"/>
    <property type="match status" value="1"/>
</dbReference>
<dbReference type="HAMAP" id="MF_00530">
    <property type="entry name" value="ATP_synth_epsil_bac"/>
    <property type="match status" value="1"/>
</dbReference>
<dbReference type="InterPro" id="IPR001469">
    <property type="entry name" value="ATP_synth_F1_dsu/esu"/>
</dbReference>
<dbReference type="InterPro" id="IPR020546">
    <property type="entry name" value="ATP_synth_F1_dsu/esu_N"/>
</dbReference>
<dbReference type="InterPro" id="IPR020547">
    <property type="entry name" value="ATP_synth_F1_esu_C"/>
</dbReference>
<dbReference type="InterPro" id="IPR036771">
    <property type="entry name" value="ATPsynth_dsu/esu_N"/>
</dbReference>
<dbReference type="NCBIfam" id="TIGR01216">
    <property type="entry name" value="ATP_synt_epsi"/>
    <property type="match status" value="1"/>
</dbReference>
<dbReference type="PANTHER" id="PTHR13822">
    <property type="entry name" value="ATP SYNTHASE DELTA/EPSILON CHAIN"/>
    <property type="match status" value="1"/>
</dbReference>
<dbReference type="PANTHER" id="PTHR13822:SF10">
    <property type="entry name" value="ATP SYNTHASE EPSILON CHAIN, CHLOROPLASTIC"/>
    <property type="match status" value="1"/>
</dbReference>
<dbReference type="Pfam" id="PF00401">
    <property type="entry name" value="ATP-synt_DE"/>
    <property type="match status" value="1"/>
</dbReference>
<dbReference type="Pfam" id="PF02823">
    <property type="entry name" value="ATP-synt_DE_N"/>
    <property type="match status" value="1"/>
</dbReference>
<dbReference type="SUPFAM" id="SSF51344">
    <property type="entry name" value="Epsilon subunit of F1F0-ATP synthase N-terminal domain"/>
    <property type="match status" value="1"/>
</dbReference>
<protein>
    <recommendedName>
        <fullName evidence="1">ATP synthase epsilon chain, chloroplastic</fullName>
    </recommendedName>
    <alternativeName>
        <fullName evidence="1">ATP synthase F1 sector epsilon subunit</fullName>
    </alternativeName>
    <alternativeName>
        <fullName evidence="1">F-ATPase epsilon subunit</fullName>
    </alternativeName>
</protein>
<comment type="function">
    <text evidence="1">Produces ATP from ADP in the presence of a proton gradient across the membrane.</text>
</comment>
<comment type="subunit">
    <text evidence="1">F-type ATPases have 2 components, CF(1) - the catalytic core - and CF(0) - the membrane proton channel. CF(1) has five subunits: alpha(3), beta(3), gamma(1), delta(1), epsilon(1). CF(0) has three main subunits: a, b and c.</text>
</comment>
<comment type="subcellular location">
    <subcellularLocation>
        <location evidence="1">Plastid</location>
        <location evidence="1">Chloroplast thylakoid membrane</location>
        <topology evidence="1">Peripheral membrane protein</topology>
    </subcellularLocation>
</comment>
<comment type="similarity">
    <text evidence="1">Belongs to the ATPase epsilon chain family.</text>
</comment>
<accession>P41623</accession>
<evidence type="ECO:0000255" key="1">
    <source>
        <dbReference type="HAMAP-Rule" id="MF_00530"/>
    </source>
</evidence>
<keyword id="KW-0066">ATP synthesis</keyword>
<keyword id="KW-0139">CF(1)</keyword>
<keyword id="KW-0150">Chloroplast</keyword>
<keyword id="KW-0375">Hydrogen ion transport</keyword>
<keyword id="KW-0406">Ion transport</keyword>
<keyword id="KW-0472">Membrane</keyword>
<keyword id="KW-0934">Plastid</keyword>
<keyword id="KW-0793">Thylakoid</keyword>
<keyword id="KW-0813">Transport</keyword>
<organism>
    <name type="scientific">Pinus thunbergii</name>
    <name type="common">Japanese black pine</name>
    <name type="synonym">Pinus thunbergiana</name>
    <dbReference type="NCBI Taxonomy" id="3350"/>
    <lineage>
        <taxon>Eukaryota</taxon>
        <taxon>Viridiplantae</taxon>
        <taxon>Streptophyta</taxon>
        <taxon>Embryophyta</taxon>
        <taxon>Tracheophyta</taxon>
        <taxon>Spermatophyta</taxon>
        <taxon>Pinopsida</taxon>
        <taxon>Pinidae</taxon>
        <taxon>Conifers I</taxon>
        <taxon>Pinales</taxon>
        <taxon>Pinaceae</taxon>
        <taxon>Pinus</taxon>
        <taxon>Pinus subgen. Pinus</taxon>
    </lineage>
</organism>
<feature type="chain" id="PRO_0000188286" description="ATP synthase epsilon chain, chloroplastic">
    <location>
        <begin position="1"/>
        <end position="137"/>
    </location>
</feature>
<gene>
    <name evidence="1" type="primary">atpE</name>
</gene>